<accession>A4XT74</accession>
<evidence type="ECO:0000255" key="1">
    <source>
        <dbReference type="HAMAP-Rule" id="MF_00676"/>
    </source>
</evidence>
<dbReference type="EMBL" id="CP000680">
    <property type="protein sequence ID" value="ABP84540.1"/>
    <property type="molecule type" value="Genomic_DNA"/>
</dbReference>
<dbReference type="STRING" id="399739.Pmen_1776"/>
<dbReference type="KEGG" id="pmy:Pmen_1776"/>
<dbReference type="PATRIC" id="fig|399739.8.peg.1802"/>
<dbReference type="eggNOG" id="COG2983">
    <property type="taxonomic scope" value="Bacteria"/>
</dbReference>
<dbReference type="HOGENOM" id="CLU_109769_0_1_6"/>
<dbReference type="OrthoDB" id="9786855at2"/>
<dbReference type="HAMAP" id="MF_00676">
    <property type="entry name" value="UPF0260"/>
    <property type="match status" value="1"/>
</dbReference>
<dbReference type="InterPro" id="IPR005358">
    <property type="entry name" value="Puta_zinc/iron-chelating_dom"/>
</dbReference>
<dbReference type="InterPro" id="IPR008228">
    <property type="entry name" value="UCP006173"/>
</dbReference>
<dbReference type="NCBIfam" id="NF003501">
    <property type="entry name" value="PRK05170.1-5"/>
    <property type="match status" value="1"/>
</dbReference>
<dbReference type="NCBIfam" id="NF003502">
    <property type="entry name" value="PRK05170.1-6"/>
    <property type="match status" value="1"/>
</dbReference>
<dbReference type="NCBIfam" id="NF003507">
    <property type="entry name" value="PRK05170.2-5"/>
    <property type="match status" value="1"/>
</dbReference>
<dbReference type="PANTHER" id="PTHR37421">
    <property type="entry name" value="UPF0260 PROTEIN YCGN"/>
    <property type="match status" value="1"/>
</dbReference>
<dbReference type="PANTHER" id="PTHR37421:SF1">
    <property type="entry name" value="UPF0260 PROTEIN YCGN"/>
    <property type="match status" value="1"/>
</dbReference>
<dbReference type="Pfam" id="PF03692">
    <property type="entry name" value="CxxCxxCC"/>
    <property type="match status" value="1"/>
</dbReference>
<dbReference type="PIRSF" id="PIRSF006173">
    <property type="entry name" value="UCP006173"/>
    <property type="match status" value="1"/>
</dbReference>
<comment type="similarity">
    <text evidence="1">Belongs to the UPF0260 family.</text>
</comment>
<name>Y1776_ECTM1</name>
<organism>
    <name type="scientific">Ectopseudomonas mendocina (strain ymp)</name>
    <name type="common">Pseudomonas mendocina</name>
    <dbReference type="NCBI Taxonomy" id="399739"/>
    <lineage>
        <taxon>Bacteria</taxon>
        <taxon>Pseudomonadati</taxon>
        <taxon>Pseudomonadota</taxon>
        <taxon>Gammaproteobacteria</taxon>
        <taxon>Pseudomonadales</taxon>
        <taxon>Pseudomonadaceae</taxon>
        <taxon>Ectopseudomonas</taxon>
    </lineage>
</organism>
<proteinExistence type="inferred from homology"/>
<protein>
    <recommendedName>
        <fullName evidence="1">UPF0260 protein Pmen_1776</fullName>
    </recommendedName>
</protein>
<gene>
    <name type="ordered locus">Pmen_1776</name>
</gene>
<reference key="1">
    <citation type="submission" date="2007-04" db="EMBL/GenBank/DDBJ databases">
        <title>Complete sequence of Pseudomonas mendocina ymp.</title>
        <authorList>
            <consortium name="US DOE Joint Genome Institute"/>
            <person name="Copeland A."/>
            <person name="Lucas S."/>
            <person name="Lapidus A."/>
            <person name="Barry K."/>
            <person name="Glavina del Rio T."/>
            <person name="Dalin E."/>
            <person name="Tice H."/>
            <person name="Pitluck S."/>
            <person name="Kiss H."/>
            <person name="Brettin T."/>
            <person name="Detter J.C."/>
            <person name="Bruce D."/>
            <person name="Han C."/>
            <person name="Schmutz J."/>
            <person name="Larimer F."/>
            <person name="Land M."/>
            <person name="Hauser L."/>
            <person name="Kyrpides N."/>
            <person name="Mikhailova N."/>
            <person name="Hersman L."/>
            <person name="Dubois J."/>
            <person name="Maurice P."/>
            <person name="Richardson P."/>
        </authorList>
    </citation>
    <scope>NUCLEOTIDE SEQUENCE [LARGE SCALE GENOMIC DNA]</scope>
    <source>
        <strain>ymp</strain>
    </source>
</reference>
<sequence>MAANSEPFWKRKTLAQLDRDEWESLCDGCGLCCLQKLEDEDDGAVYYTRIACKLLDLQTCRCSDYANRIKHVPDCIQLTPAQADQFQWLPPTCAYRLVSEGRDLPHWHHLVSGDPDAVHAERISQSGRMLSENSVAEEDWEEHLIFRAG</sequence>
<feature type="chain" id="PRO_1000061960" description="UPF0260 protein Pmen_1776">
    <location>
        <begin position="1"/>
        <end position="149"/>
    </location>
</feature>